<evidence type="ECO:0000255" key="1">
    <source>
        <dbReference type="HAMAP-Rule" id="MF_00277"/>
    </source>
</evidence>
<evidence type="ECO:0000255" key="2">
    <source>
        <dbReference type="PROSITE-ProRule" id="PRU01175"/>
    </source>
</evidence>
<feature type="chain" id="PRO_0000192747" description="Bifunctional uridylyltransferase/uridylyl-removing enzyme">
    <location>
        <begin position="1"/>
        <end position="852"/>
    </location>
</feature>
<feature type="domain" description="HD" evidence="2">
    <location>
        <begin position="436"/>
        <end position="558"/>
    </location>
</feature>
<feature type="domain" description="ACT 1" evidence="1">
    <location>
        <begin position="673"/>
        <end position="757"/>
    </location>
</feature>
<feature type="domain" description="ACT 2" evidence="1">
    <location>
        <begin position="785"/>
        <end position="852"/>
    </location>
</feature>
<feature type="region of interest" description="Uridylyltransferase">
    <location>
        <begin position="1"/>
        <end position="318"/>
    </location>
</feature>
<feature type="region of interest" description="Uridylyl-removing">
    <location>
        <begin position="319"/>
        <end position="672"/>
    </location>
</feature>
<protein>
    <recommendedName>
        <fullName evidence="1">Bifunctional uridylyltransferase/uridylyl-removing enzyme</fullName>
        <shortName evidence="1">UTase/UR</shortName>
    </recommendedName>
    <alternativeName>
        <fullName evidence="1">Bifunctional [protein-PII] modification enzyme</fullName>
    </alternativeName>
    <alternativeName>
        <fullName evidence="1">Bifunctional nitrogen sensor protein</fullName>
    </alternativeName>
    <domain>
        <recommendedName>
            <fullName evidence="1">[Protein-PII] uridylyltransferase</fullName>
            <shortName evidence="1">PII uridylyltransferase</shortName>
            <shortName evidence="1">UTase</shortName>
            <ecNumber evidence="1">2.7.7.59</ecNumber>
        </recommendedName>
    </domain>
    <domain>
        <recommendedName>
            <fullName evidence="1">[Protein-PII]-UMP uridylyl-removing enzyme</fullName>
            <shortName evidence="1">UR</shortName>
            <ecNumber evidence="1">3.1.4.-</ecNumber>
        </recommendedName>
    </domain>
</protein>
<reference key="1">
    <citation type="journal article" date="2000" name="Nature">
        <title>Complete DNA sequence of a serogroup A strain of Neisseria meningitidis Z2491.</title>
        <authorList>
            <person name="Parkhill J."/>
            <person name="Achtman M."/>
            <person name="James K.D."/>
            <person name="Bentley S.D."/>
            <person name="Churcher C.M."/>
            <person name="Klee S.R."/>
            <person name="Morelli G."/>
            <person name="Basham D."/>
            <person name="Brown D."/>
            <person name="Chillingworth T."/>
            <person name="Davies R.M."/>
            <person name="Davis P."/>
            <person name="Devlin K."/>
            <person name="Feltwell T."/>
            <person name="Hamlin N."/>
            <person name="Holroyd S."/>
            <person name="Jagels K."/>
            <person name="Leather S."/>
            <person name="Moule S."/>
            <person name="Mungall K.L."/>
            <person name="Quail M.A."/>
            <person name="Rajandream M.A."/>
            <person name="Rutherford K.M."/>
            <person name="Simmonds M."/>
            <person name="Skelton J."/>
            <person name="Whitehead S."/>
            <person name="Spratt B.G."/>
            <person name="Barrell B.G."/>
        </authorList>
    </citation>
    <scope>NUCLEOTIDE SEQUENCE [LARGE SCALE GENOMIC DNA]</scope>
    <source>
        <strain>DSM 15465 / Z2491</strain>
    </source>
</reference>
<gene>
    <name evidence="1" type="primary">glnD</name>
    <name type="ordered locus">NMA1374</name>
</gene>
<organism>
    <name type="scientific">Neisseria meningitidis serogroup A / serotype 4A (strain DSM 15465 / Z2491)</name>
    <dbReference type="NCBI Taxonomy" id="122587"/>
    <lineage>
        <taxon>Bacteria</taxon>
        <taxon>Pseudomonadati</taxon>
        <taxon>Pseudomonadota</taxon>
        <taxon>Betaproteobacteria</taxon>
        <taxon>Neisseriales</taxon>
        <taxon>Neisseriaceae</taxon>
        <taxon>Neisseria</taxon>
    </lineage>
</organism>
<accession>Q9JUC9</accession>
<accession>A1IRZ9</accession>
<dbReference type="EC" id="2.7.7.59" evidence="1"/>
<dbReference type="EC" id="3.1.4.-" evidence="1"/>
<dbReference type="EMBL" id="AL157959">
    <property type="protein sequence ID" value="CAM08547.1"/>
    <property type="molecule type" value="Genomic_DNA"/>
</dbReference>
<dbReference type="PIR" id="H81906">
    <property type="entry name" value="H81906"/>
</dbReference>
<dbReference type="RefSeq" id="WP_002246201.1">
    <property type="nucleotide sequence ID" value="NC_003116.1"/>
</dbReference>
<dbReference type="SMR" id="Q9JUC9"/>
<dbReference type="EnsemblBacteria" id="CAM08547">
    <property type="protein sequence ID" value="CAM08547"/>
    <property type="gene ID" value="NMA1374"/>
</dbReference>
<dbReference type="KEGG" id="nma:NMA1374"/>
<dbReference type="HOGENOM" id="CLU_012833_0_0_4"/>
<dbReference type="Proteomes" id="UP000000626">
    <property type="component" value="Chromosome"/>
</dbReference>
<dbReference type="GO" id="GO:0008773">
    <property type="term" value="F:[protein-PII] uridylyltransferase activity"/>
    <property type="evidence" value="ECO:0007669"/>
    <property type="project" value="UniProtKB-UniRule"/>
</dbReference>
<dbReference type="GO" id="GO:0008081">
    <property type="term" value="F:phosphoric diester hydrolase activity"/>
    <property type="evidence" value="ECO:0007669"/>
    <property type="project" value="UniProtKB-UniRule"/>
</dbReference>
<dbReference type="GO" id="GO:0006808">
    <property type="term" value="P:regulation of nitrogen utilization"/>
    <property type="evidence" value="ECO:0007669"/>
    <property type="project" value="UniProtKB-UniRule"/>
</dbReference>
<dbReference type="CDD" id="cd04899">
    <property type="entry name" value="ACT_ACR-UUR-like_2"/>
    <property type="match status" value="1"/>
</dbReference>
<dbReference type="CDD" id="cd04900">
    <property type="entry name" value="ACT_UUR-like_1"/>
    <property type="match status" value="1"/>
</dbReference>
<dbReference type="CDD" id="cd00077">
    <property type="entry name" value="HDc"/>
    <property type="match status" value="1"/>
</dbReference>
<dbReference type="CDD" id="cd05401">
    <property type="entry name" value="NT_GlnE_GlnD_like"/>
    <property type="match status" value="1"/>
</dbReference>
<dbReference type="Gene3D" id="1.10.3210.10">
    <property type="entry name" value="Hypothetical protein af1432"/>
    <property type="match status" value="1"/>
</dbReference>
<dbReference type="HAMAP" id="MF_00277">
    <property type="entry name" value="PII_uridylyl_transf"/>
    <property type="match status" value="1"/>
</dbReference>
<dbReference type="InterPro" id="IPR045865">
    <property type="entry name" value="ACT-like_dom_sf"/>
</dbReference>
<dbReference type="InterPro" id="IPR002912">
    <property type="entry name" value="ACT_dom"/>
</dbReference>
<dbReference type="InterPro" id="IPR003607">
    <property type="entry name" value="HD/PDEase_dom"/>
</dbReference>
<dbReference type="InterPro" id="IPR006674">
    <property type="entry name" value="HD_domain"/>
</dbReference>
<dbReference type="InterPro" id="IPR043519">
    <property type="entry name" value="NT_sf"/>
</dbReference>
<dbReference type="InterPro" id="IPR013546">
    <property type="entry name" value="PII_UdlTrfase/GS_AdlTrfase"/>
</dbReference>
<dbReference type="InterPro" id="IPR010043">
    <property type="entry name" value="UTase/UR"/>
</dbReference>
<dbReference type="NCBIfam" id="TIGR01693">
    <property type="entry name" value="UTase_glnD"/>
    <property type="match status" value="1"/>
</dbReference>
<dbReference type="PANTHER" id="PTHR47320">
    <property type="entry name" value="BIFUNCTIONAL URIDYLYLTRANSFERASE/URIDYLYL-REMOVING ENZYME"/>
    <property type="match status" value="1"/>
</dbReference>
<dbReference type="PANTHER" id="PTHR47320:SF1">
    <property type="entry name" value="BIFUNCTIONAL URIDYLYLTRANSFERASE_URIDYLYL-REMOVING ENZYME"/>
    <property type="match status" value="1"/>
</dbReference>
<dbReference type="Pfam" id="PF08335">
    <property type="entry name" value="GlnD_UR_UTase"/>
    <property type="match status" value="1"/>
</dbReference>
<dbReference type="Pfam" id="PF01966">
    <property type="entry name" value="HD"/>
    <property type="match status" value="1"/>
</dbReference>
<dbReference type="PIRSF" id="PIRSF006288">
    <property type="entry name" value="PII_uridyltransf"/>
    <property type="match status" value="1"/>
</dbReference>
<dbReference type="SMART" id="SM00471">
    <property type="entry name" value="HDc"/>
    <property type="match status" value="1"/>
</dbReference>
<dbReference type="SUPFAM" id="SSF55021">
    <property type="entry name" value="ACT-like"/>
    <property type="match status" value="2"/>
</dbReference>
<dbReference type="SUPFAM" id="SSF109604">
    <property type="entry name" value="HD-domain/PDEase-like"/>
    <property type="match status" value="1"/>
</dbReference>
<dbReference type="SUPFAM" id="SSF81301">
    <property type="entry name" value="Nucleotidyltransferase"/>
    <property type="match status" value="1"/>
</dbReference>
<dbReference type="SUPFAM" id="SSF81593">
    <property type="entry name" value="Nucleotidyltransferase substrate binding subunit/domain"/>
    <property type="match status" value="1"/>
</dbReference>
<dbReference type="PROSITE" id="PS51671">
    <property type="entry name" value="ACT"/>
    <property type="match status" value="2"/>
</dbReference>
<dbReference type="PROSITE" id="PS51831">
    <property type="entry name" value="HD"/>
    <property type="match status" value="1"/>
</dbReference>
<name>GLND_NEIMA</name>
<keyword id="KW-0378">Hydrolase</keyword>
<keyword id="KW-0460">Magnesium</keyword>
<keyword id="KW-0511">Multifunctional enzyme</keyword>
<keyword id="KW-0548">Nucleotidyltransferase</keyword>
<keyword id="KW-0677">Repeat</keyword>
<keyword id="KW-0808">Transferase</keyword>
<sequence length="852" mass="97058">MPANLSSALETFKQQRDAAEAHYLKANRVSVFFREYTAAVETLLAALWAEYFQNSALCLMAVGGFGRGELYPCSDVDLAVVSPAPLSDGIQEQIARFVQTLWDCKLMPSVKSGSVDELCESVRNDITGDTAFLEARFLFGNRQTADKLAEKMNAQRNVAAFVEAKLVEMEHRHAKSQGSGAVLEPNIKSCPGGLRDIHTLLWIAKAQGLATDLPDLLKQRILTRAEAGMLSHGYRRLAHIRIHLHLNAKRAEDRLLFDLQPQVAESMGYEGLNLRRQSEELMRVFYRAIKTVKQLSGILTPMLRSRVSSAPMRVTLRIDDDYIQVNNQIAARHTDIFFRRPEHIFKIVEIMQQRNDITALEPQTLRAWWGATRKINRSFYQNSENRHRFAGFFRNGNGLTQTLRFLNLYGVLGRYLPAWEKIVGLLQHDLFHIYPVDDHILTVVRNVRRLALDMHSHELPYASALMQSFEKQDILYLAAFFHDIAKGRGGDHAIQGIADARQFAADHFLTGEESDLLAWLVENHLLMSAVAQKEDIQDPDVLDAFCKRVQTHERLSALYLLTISDIRGTNPKLWNAWRASLLESLFHAAGRYLTGNGGNPHTLFGRRRQEAADLLTRAAVPEKQQKKLWNALGSAYFARHQSREILWHAANLVHDFETPIVRSRILFKSDSFQVMVFMPNGPRLFARLCRIFSRHGFDILAARAFITEHDYILDTFIVQIPSQHAPEDYPDIQSALEAELNSFIHGHTVAETQSHSRRISRRSRYMPIAPSITITPEEDYPDWYSVEITAVNRPFLLADMAEVFFAHNVSLRYAKISTLDERAEDSFTVFSLDLKNPKIQSSLKQTLLEQLS</sequence>
<proteinExistence type="inferred from homology"/>
<comment type="function">
    <text evidence="1">Modifies, by uridylylation and deuridylylation, the PII regulatory proteins (GlnB and homologs), in response to the nitrogen status of the cell that GlnD senses through the glutamine level. Under low glutamine levels, catalyzes the conversion of the PII proteins and UTP to PII-UMP and PPi, while under higher glutamine levels, GlnD hydrolyzes PII-UMP to PII and UMP (deuridylylation). Thus, controls uridylylation state and activity of the PII proteins, and plays an important role in the regulation of nitrogen assimilation and metabolism.</text>
</comment>
<comment type="catalytic activity">
    <reaction evidence="1">
        <text>[protein-PII]-L-tyrosine + UTP = [protein-PII]-uridylyl-L-tyrosine + diphosphate</text>
        <dbReference type="Rhea" id="RHEA:13673"/>
        <dbReference type="Rhea" id="RHEA-COMP:12147"/>
        <dbReference type="Rhea" id="RHEA-COMP:12148"/>
        <dbReference type="ChEBI" id="CHEBI:33019"/>
        <dbReference type="ChEBI" id="CHEBI:46398"/>
        <dbReference type="ChEBI" id="CHEBI:46858"/>
        <dbReference type="ChEBI" id="CHEBI:90602"/>
        <dbReference type="EC" id="2.7.7.59"/>
    </reaction>
</comment>
<comment type="catalytic activity">
    <reaction evidence="1">
        <text>[protein-PII]-uridylyl-L-tyrosine + H2O = [protein-PII]-L-tyrosine + UMP + H(+)</text>
        <dbReference type="Rhea" id="RHEA:48600"/>
        <dbReference type="Rhea" id="RHEA-COMP:12147"/>
        <dbReference type="Rhea" id="RHEA-COMP:12148"/>
        <dbReference type="ChEBI" id="CHEBI:15377"/>
        <dbReference type="ChEBI" id="CHEBI:15378"/>
        <dbReference type="ChEBI" id="CHEBI:46858"/>
        <dbReference type="ChEBI" id="CHEBI:57865"/>
        <dbReference type="ChEBI" id="CHEBI:90602"/>
    </reaction>
</comment>
<comment type="cofactor">
    <cofactor evidence="1">
        <name>Mg(2+)</name>
        <dbReference type="ChEBI" id="CHEBI:18420"/>
    </cofactor>
</comment>
<comment type="activity regulation">
    <text evidence="1">Uridylyltransferase (UTase) activity is inhibited by glutamine, while glutamine activates uridylyl-removing (UR) activity.</text>
</comment>
<comment type="domain">
    <text evidence="1">Has four distinct domains: an N-terminal nucleotidyltransferase (NT) domain responsible for UTase activity, a central HD domain that encodes UR activity, and two C-terminal ACT domains that seem to have a role in glutamine sensing.</text>
</comment>
<comment type="similarity">
    <text evidence="1">Belongs to the GlnD family.</text>
</comment>